<feature type="chain" id="PRO_0000442970" description="Probable chaperonin-like protein PrmG">
    <location>
        <begin position="1"/>
        <end position="391" status="greater than"/>
    </location>
</feature>
<feature type="region of interest" description="Disordered" evidence="1">
    <location>
        <begin position="153"/>
        <end position="191"/>
    </location>
</feature>
<feature type="compositionally biased region" description="Polar residues" evidence="1">
    <location>
        <begin position="154"/>
        <end position="174"/>
    </location>
</feature>
<feature type="non-terminal residue" evidence="5">
    <location>
        <position position="391"/>
    </location>
</feature>
<accession>Q768S8</accession>
<sequence>MAKELRYNAEARLRLERGVNALADAVKVTLGPKGRNAVLEKLTGPPTITNDGVTIAREIQLRDPFANMGAQLVKEVAMKTNGVVGDGTTTATVLAQAMVREGLRAVEQGANPMRVRRGIERAVTAVLGSLTEQAVQIGGRSDLERIARWPPATTRWSVRSSPPPSNTSARTASSPPRRATHSGCRSRSSTASEFDHGYISGYMVTNPERMEAVLDNPVVLLTNKKITSVQEIMPAIEVAKRADRPLLVLAEDVDGPALQLLVGGNMHNTMRSVVVRAPGFGHRRIAELEDLSVALGGHVIAKDTGIELSEVSMEHLGTVMRVTVTENETTIVGAHGEQELVDARVRHLEAQLERARIDADRDALELRIARMTGRVAVIRVGGVTSVELKER</sequence>
<comment type="function">
    <text evidence="4">Probably plays an essential role in the productive folding of PrmA and PrmC, and thus in the formation of the active PrmABCD complex.</text>
</comment>
<comment type="similarity">
    <text evidence="3">Belongs to the chaperonin (HSP60) family.</text>
</comment>
<name>PRMG_GORST</name>
<evidence type="ECO:0000256" key="1">
    <source>
        <dbReference type="SAM" id="MobiDB-lite"/>
    </source>
</evidence>
<evidence type="ECO:0000303" key="2">
    <source>
    </source>
</evidence>
<evidence type="ECO:0000305" key="3"/>
<evidence type="ECO:0000305" key="4">
    <source>
    </source>
</evidence>
<evidence type="ECO:0000312" key="5">
    <source>
        <dbReference type="EMBL" id="BAD03963.1"/>
    </source>
</evidence>
<proteinExistence type="inferred from homology"/>
<organism>
    <name type="scientific">Gordonia sp. (strain TY-5)</name>
    <dbReference type="NCBI Taxonomy" id="235467"/>
    <lineage>
        <taxon>Bacteria</taxon>
        <taxon>Bacillati</taxon>
        <taxon>Actinomycetota</taxon>
        <taxon>Actinomycetes</taxon>
        <taxon>Mycobacteriales</taxon>
        <taxon>Gordoniaceae</taxon>
        <taxon>Gordonia</taxon>
    </lineage>
</organism>
<keyword id="KW-0143">Chaperone</keyword>
<gene>
    <name evidence="3" type="primary">prmG</name>
</gene>
<protein>
    <recommendedName>
        <fullName evidence="2">Probable chaperonin-like protein PrmG</fullName>
    </recommendedName>
</protein>
<dbReference type="EMBL" id="AB112920">
    <property type="protein sequence ID" value="BAD03963.1"/>
    <property type="molecule type" value="Genomic_DNA"/>
</dbReference>
<dbReference type="SMR" id="Q768S8"/>
<dbReference type="GO" id="GO:0005524">
    <property type="term" value="F:ATP binding"/>
    <property type="evidence" value="ECO:0007669"/>
    <property type="project" value="InterPro"/>
</dbReference>
<dbReference type="GO" id="GO:0140662">
    <property type="term" value="F:ATP-dependent protein folding chaperone"/>
    <property type="evidence" value="ECO:0007669"/>
    <property type="project" value="InterPro"/>
</dbReference>
<dbReference type="GO" id="GO:0042026">
    <property type="term" value="P:protein refolding"/>
    <property type="evidence" value="ECO:0007669"/>
    <property type="project" value="InterPro"/>
</dbReference>
<dbReference type="FunFam" id="3.50.7.10:FF:000001">
    <property type="entry name" value="60 kDa chaperonin"/>
    <property type="match status" value="1"/>
</dbReference>
<dbReference type="Gene3D" id="3.50.7.10">
    <property type="entry name" value="GroEL"/>
    <property type="match status" value="1"/>
</dbReference>
<dbReference type="Gene3D" id="1.10.560.10">
    <property type="entry name" value="GroEL-like equatorial domain"/>
    <property type="match status" value="1"/>
</dbReference>
<dbReference type="Gene3D" id="3.30.260.10">
    <property type="entry name" value="TCP-1-like chaperonin intermediate domain"/>
    <property type="match status" value="1"/>
</dbReference>
<dbReference type="InterPro" id="IPR001844">
    <property type="entry name" value="Cpn60/GroEL"/>
</dbReference>
<dbReference type="InterPro" id="IPR002423">
    <property type="entry name" value="Cpn60/GroEL/TCP-1"/>
</dbReference>
<dbReference type="InterPro" id="IPR027409">
    <property type="entry name" value="GroEL-like_apical_dom_sf"/>
</dbReference>
<dbReference type="InterPro" id="IPR027413">
    <property type="entry name" value="GROEL-like_equatorial_sf"/>
</dbReference>
<dbReference type="InterPro" id="IPR027410">
    <property type="entry name" value="TCP-1-like_intermed_sf"/>
</dbReference>
<dbReference type="PANTHER" id="PTHR45633">
    <property type="entry name" value="60 KDA HEAT SHOCK PROTEIN, MITOCHONDRIAL"/>
    <property type="match status" value="1"/>
</dbReference>
<dbReference type="Pfam" id="PF00118">
    <property type="entry name" value="Cpn60_TCP1"/>
    <property type="match status" value="1"/>
</dbReference>
<dbReference type="PRINTS" id="PR00298">
    <property type="entry name" value="CHAPERONIN60"/>
</dbReference>
<dbReference type="SUPFAM" id="SSF52029">
    <property type="entry name" value="GroEL apical domain-like"/>
    <property type="match status" value="1"/>
</dbReference>
<dbReference type="SUPFAM" id="SSF48592">
    <property type="entry name" value="GroEL equatorial domain-like"/>
    <property type="match status" value="1"/>
</dbReference>
<reference key="1">
    <citation type="journal article" date="2003" name="J. Bacteriol.">
        <title>Propane monooxygenase and NAD+-dependent secondary alcohol dehydrogenase in propane metabolism by Gordonia sp. strain TY-5.</title>
        <authorList>
            <person name="Kotani T."/>
            <person name="Yamamoto T."/>
            <person name="Yurimoto H."/>
            <person name="Sakai Y."/>
            <person name="Kato N."/>
        </authorList>
    </citation>
    <scope>NUCLEOTIDE SEQUENCE [GENOMIC DNA]</scope>
    <source>
        <strain evidence="5">TY-5</strain>
    </source>
</reference>
<reference key="2">
    <citation type="journal article" date="2013" name="FEBS J.">
        <title>The mycobacterial binuclear iron monooxygenases require a specific chaperonin-like protein for functional expression in a heterologous host.</title>
        <authorList>
            <person name="Furuya T."/>
            <person name="Hayashi M."/>
            <person name="Semba H."/>
            <person name="Kino K."/>
        </authorList>
    </citation>
    <scope>FUNCTION</scope>
</reference>